<evidence type="ECO:0000250" key="1">
    <source>
        <dbReference type="UniProtKB" id="P11983"/>
    </source>
</evidence>
<evidence type="ECO:0000250" key="2">
    <source>
        <dbReference type="UniProtKB" id="P17987"/>
    </source>
</evidence>
<evidence type="ECO:0000256" key="3">
    <source>
        <dbReference type="SAM" id="MobiDB-lite"/>
    </source>
</evidence>
<evidence type="ECO:0000305" key="4"/>
<accession>Q9XT06</accession>
<sequence>MEGPLSVFGERTTGESIRSQNVMAAASIANIVKSSLGPVGLDKMLVDDIGDVTITNDGATILKLLEVEHPAAKVLCELADLQDKEVGDGTTSVVIIAAELLKNADELVKQKIHPTSIIGGYRLACKEAVRYINENLIINTDELGKDCLINAAKTSMSSKIIGIDGDFFANMVVDAVLAVKYTDVKGQPRYPVNSINVLKAHGRSQKESMLINGYALNCVVASQGMPKRIVNAKIACLDFSLQKTKMKLGVQVVITDPEKLDQIRKREADITKERIQKILATGANVILTTGGIDDMCLKYFVESMTIAVRRVLKRDLKRIAKASGATILSTLASLEGEESFEASMLGQAEEVVQERICDDELILIKNTKARTSASIILRGANDFMCDEMERSLHDALCVVKRVLESKSVVPGGGAVEAALSIYLENYATSMGSREQLAIAEFARSLLIIPNTLAVNAAQDSTDLVAKLRAFHNEAQVNPERKNLKWIGLDLVNGKPRDNRQTGVFEPTMVKVKSLKFATEAAITILRIDDLIKLHPESKDDKRGGTYEDAVHSGAIED</sequence>
<dbReference type="EC" id="3.6.1.-" evidence="2"/>
<dbReference type="EMBL" id="AF143497">
    <property type="protein sequence ID" value="AAD34973.1"/>
    <property type="molecule type" value="mRNA"/>
</dbReference>
<dbReference type="RefSeq" id="NP_001028144.1">
    <property type="nucleotide sequence ID" value="NM_001032972.2"/>
</dbReference>
<dbReference type="SMR" id="Q9XT06"/>
<dbReference type="FunCoup" id="Q9XT06">
    <property type="interactions" value="2306"/>
</dbReference>
<dbReference type="STRING" id="13616.ENSMODP00000052818"/>
<dbReference type="GeneID" id="497250"/>
<dbReference type="KEGG" id="mdo:497250"/>
<dbReference type="CTD" id="6950"/>
<dbReference type="eggNOG" id="KOG0360">
    <property type="taxonomic scope" value="Eukaryota"/>
</dbReference>
<dbReference type="InParanoid" id="Q9XT06"/>
<dbReference type="OrthoDB" id="496at2759"/>
<dbReference type="Proteomes" id="UP000002280">
    <property type="component" value="Unplaced"/>
</dbReference>
<dbReference type="GO" id="GO:0005813">
    <property type="term" value="C:centrosome"/>
    <property type="evidence" value="ECO:0007669"/>
    <property type="project" value="UniProtKB-SubCell"/>
</dbReference>
<dbReference type="GO" id="GO:0005832">
    <property type="term" value="C:chaperonin-containing T-complex"/>
    <property type="evidence" value="ECO:0000250"/>
    <property type="project" value="UniProtKB"/>
</dbReference>
<dbReference type="GO" id="GO:0005524">
    <property type="term" value="F:ATP binding"/>
    <property type="evidence" value="ECO:0007669"/>
    <property type="project" value="UniProtKB-KW"/>
</dbReference>
<dbReference type="GO" id="GO:0016887">
    <property type="term" value="F:ATP hydrolysis activity"/>
    <property type="evidence" value="ECO:0007669"/>
    <property type="project" value="InterPro"/>
</dbReference>
<dbReference type="GO" id="GO:0140662">
    <property type="term" value="F:ATP-dependent protein folding chaperone"/>
    <property type="evidence" value="ECO:0007669"/>
    <property type="project" value="InterPro"/>
</dbReference>
<dbReference type="GO" id="GO:0051082">
    <property type="term" value="F:unfolded protein binding"/>
    <property type="evidence" value="ECO:0000318"/>
    <property type="project" value="GO_Central"/>
</dbReference>
<dbReference type="GO" id="GO:0006457">
    <property type="term" value="P:protein folding"/>
    <property type="evidence" value="ECO:0000318"/>
    <property type="project" value="GO_Central"/>
</dbReference>
<dbReference type="CDD" id="cd03335">
    <property type="entry name" value="TCP1_alpha"/>
    <property type="match status" value="1"/>
</dbReference>
<dbReference type="FunFam" id="3.50.7.10:FF:000009">
    <property type="entry name" value="T-complex protein 1 subunit alpha"/>
    <property type="match status" value="1"/>
</dbReference>
<dbReference type="FunFam" id="3.30.260.10:FF:000022">
    <property type="entry name" value="T-complex protein 1 subunit eta"/>
    <property type="match status" value="1"/>
</dbReference>
<dbReference type="FunFam" id="1.10.560.10:FF:000070">
    <property type="entry name" value="Uncharacterized protein"/>
    <property type="match status" value="1"/>
</dbReference>
<dbReference type="FunFam" id="3.30.260.10:FF:000040">
    <property type="entry name" value="Uncharacterized protein"/>
    <property type="match status" value="1"/>
</dbReference>
<dbReference type="Gene3D" id="3.50.7.10">
    <property type="entry name" value="GroEL"/>
    <property type="match status" value="1"/>
</dbReference>
<dbReference type="Gene3D" id="1.10.560.10">
    <property type="entry name" value="GroEL-like equatorial domain"/>
    <property type="match status" value="1"/>
</dbReference>
<dbReference type="Gene3D" id="3.30.260.10">
    <property type="entry name" value="TCP-1-like chaperonin intermediate domain"/>
    <property type="match status" value="1"/>
</dbReference>
<dbReference type="InterPro" id="IPR012715">
    <property type="entry name" value="Chap_CCT_alpha"/>
</dbReference>
<dbReference type="InterPro" id="IPR017998">
    <property type="entry name" value="Chaperone_TCP-1"/>
</dbReference>
<dbReference type="InterPro" id="IPR002194">
    <property type="entry name" value="Chaperonin_TCP-1_CS"/>
</dbReference>
<dbReference type="InterPro" id="IPR002423">
    <property type="entry name" value="Cpn60/GroEL/TCP-1"/>
</dbReference>
<dbReference type="InterPro" id="IPR027409">
    <property type="entry name" value="GroEL-like_apical_dom_sf"/>
</dbReference>
<dbReference type="InterPro" id="IPR027413">
    <property type="entry name" value="GROEL-like_equatorial_sf"/>
</dbReference>
<dbReference type="InterPro" id="IPR027410">
    <property type="entry name" value="TCP-1-like_intermed_sf"/>
</dbReference>
<dbReference type="InterPro" id="IPR053374">
    <property type="entry name" value="TCP-1_chaperonin"/>
</dbReference>
<dbReference type="InterPro" id="IPR054827">
    <property type="entry name" value="thermosome_alpha"/>
</dbReference>
<dbReference type="NCBIfam" id="TIGR02340">
    <property type="entry name" value="chap_CCT_alpha"/>
    <property type="match status" value="1"/>
</dbReference>
<dbReference type="NCBIfam" id="NF041082">
    <property type="entry name" value="thermosome_alpha"/>
    <property type="match status" value="1"/>
</dbReference>
<dbReference type="NCBIfam" id="NF041083">
    <property type="entry name" value="thermosome_beta"/>
    <property type="match status" value="1"/>
</dbReference>
<dbReference type="PANTHER" id="PTHR11353">
    <property type="entry name" value="CHAPERONIN"/>
    <property type="match status" value="1"/>
</dbReference>
<dbReference type="Pfam" id="PF00118">
    <property type="entry name" value="Cpn60_TCP1"/>
    <property type="match status" value="1"/>
</dbReference>
<dbReference type="PRINTS" id="PR00304">
    <property type="entry name" value="TCOMPLEXTCP1"/>
</dbReference>
<dbReference type="SUPFAM" id="SSF52029">
    <property type="entry name" value="GroEL apical domain-like"/>
    <property type="match status" value="1"/>
</dbReference>
<dbReference type="SUPFAM" id="SSF48592">
    <property type="entry name" value="GroEL equatorial domain-like"/>
    <property type="match status" value="1"/>
</dbReference>
<dbReference type="SUPFAM" id="SSF54849">
    <property type="entry name" value="GroEL-intermediate domain like"/>
    <property type="match status" value="1"/>
</dbReference>
<dbReference type="PROSITE" id="PS00750">
    <property type="entry name" value="TCP1_1"/>
    <property type="match status" value="1"/>
</dbReference>
<dbReference type="PROSITE" id="PS00751">
    <property type="entry name" value="TCP1_2"/>
    <property type="match status" value="1"/>
</dbReference>
<dbReference type="PROSITE" id="PS00995">
    <property type="entry name" value="TCP1_3"/>
    <property type="match status" value="1"/>
</dbReference>
<organism>
    <name type="scientific">Monodelphis domestica</name>
    <name type="common">Gray short-tailed opossum</name>
    <dbReference type="NCBI Taxonomy" id="13616"/>
    <lineage>
        <taxon>Eukaryota</taxon>
        <taxon>Metazoa</taxon>
        <taxon>Chordata</taxon>
        <taxon>Craniata</taxon>
        <taxon>Vertebrata</taxon>
        <taxon>Euteleostomi</taxon>
        <taxon>Mammalia</taxon>
        <taxon>Metatheria</taxon>
        <taxon>Didelphimorphia</taxon>
        <taxon>Didelphidae</taxon>
        <taxon>Monodelphis</taxon>
    </lineage>
</organism>
<feature type="chain" id="PRO_0000128303" description="T-complex protein 1 subunit alpha">
    <location>
        <begin position="1"/>
        <end position="557"/>
    </location>
</feature>
<feature type="region of interest" description="Disordered" evidence="3">
    <location>
        <begin position="538"/>
        <end position="557"/>
    </location>
</feature>
<feature type="compositionally biased region" description="Basic and acidic residues" evidence="3">
    <location>
        <begin position="538"/>
        <end position="550"/>
    </location>
</feature>
<feature type="binding site" evidence="2">
    <location>
        <position position="37"/>
    </location>
    <ligand>
        <name>ADP</name>
        <dbReference type="ChEBI" id="CHEBI:456216"/>
    </ligand>
</feature>
<feature type="binding site" evidence="2">
    <location>
        <position position="37"/>
    </location>
    <ligand>
        <name>ATP</name>
        <dbReference type="ChEBI" id="CHEBI:30616"/>
    </ligand>
</feature>
<feature type="binding site" evidence="2">
    <location>
        <position position="88"/>
    </location>
    <ligand>
        <name>Mg(2+)</name>
        <dbReference type="ChEBI" id="CHEBI:18420"/>
    </ligand>
</feature>
<feature type="binding site" evidence="2">
    <location>
        <position position="89"/>
    </location>
    <ligand>
        <name>ADP</name>
        <dbReference type="ChEBI" id="CHEBI:456216"/>
    </ligand>
</feature>
<feature type="binding site" evidence="2">
    <location>
        <position position="89"/>
    </location>
    <ligand>
        <name>ATP</name>
        <dbReference type="ChEBI" id="CHEBI:30616"/>
    </ligand>
</feature>
<feature type="binding site" evidence="2">
    <location>
        <position position="90"/>
    </location>
    <ligand>
        <name>ADP</name>
        <dbReference type="ChEBI" id="CHEBI:456216"/>
    </ligand>
</feature>
<feature type="binding site" evidence="2">
    <location>
        <position position="90"/>
    </location>
    <ligand>
        <name>ATP</name>
        <dbReference type="ChEBI" id="CHEBI:30616"/>
    </ligand>
</feature>
<feature type="binding site" evidence="2">
    <location>
        <position position="91"/>
    </location>
    <ligand>
        <name>ADP</name>
        <dbReference type="ChEBI" id="CHEBI:456216"/>
    </ligand>
</feature>
<feature type="binding site" evidence="2">
    <location>
        <position position="91"/>
    </location>
    <ligand>
        <name>ATP</name>
        <dbReference type="ChEBI" id="CHEBI:30616"/>
    </ligand>
</feature>
<feature type="binding site" evidence="2">
    <location>
        <position position="92"/>
    </location>
    <ligand>
        <name>ADP</name>
        <dbReference type="ChEBI" id="CHEBI:456216"/>
    </ligand>
</feature>
<feature type="binding site" evidence="2">
    <location>
        <position position="158"/>
    </location>
    <ligand>
        <name>ADP</name>
        <dbReference type="ChEBI" id="CHEBI:456216"/>
    </ligand>
</feature>
<feature type="binding site" evidence="2">
    <location>
        <position position="159"/>
    </location>
    <ligand>
        <name>ADP</name>
        <dbReference type="ChEBI" id="CHEBI:456216"/>
    </ligand>
</feature>
<feature type="binding site" evidence="2">
    <location>
        <position position="412"/>
    </location>
    <ligand>
        <name>ADP</name>
        <dbReference type="ChEBI" id="CHEBI:456216"/>
    </ligand>
</feature>
<feature type="binding site" evidence="2">
    <location>
        <position position="505"/>
    </location>
    <ligand>
        <name>ADP</name>
        <dbReference type="ChEBI" id="CHEBI:456216"/>
    </ligand>
</feature>
<feature type="modified residue" description="N-acetylmethionine" evidence="2">
    <location>
        <position position="1"/>
    </location>
</feature>
<feature type="modified residue" description="Phosphoserine" evidence="2">
    <location>
        <position position="6"/>
    </location>
</feature>
<feature type="modified residue" description="Phosphotyrosine" evidence="2">
    <location>
        <position position="181"/>
    </location>
</feature>
<feature type="modified residue" description="N6-acetyllysine" evidence="2">
    <location>
        <position position="199"/>
    </location>
</feature>
<feature type="modified residue" description="N6-acetyllysine" evidence="2">
    <location>
        <position position="400"/>
    </location>
</feature>
<feature type="modified residue" description="N6-acetyllysine" evidence="1">
    <location>
        <position position="494"/>
    </location>
</feature>
<feature type="modified residue" description="Phosphoserine" evidence="2">
    <location>
        <position position="552"/>
    </location>
</feature>
<proteinExistence type="evidence at transcript level"/>
<comment type="function">
    <text evidence="2">Component of the chaperonin-containing T-complex (TRiC), a molecular chaperone complex that assists the folding of actin, tubulin and other proteins upon ATP hydrolysis. The TRiC complex mediates the folding of WRAP53/TCAB1, thereby regulating telomere maintenance. As part of the TRiC complex may play a role in the assembly of BBSome, a complex involved in ciliogenesis regulating transports vesicles to the cilia.</text>
</comment>
<comment type="catalytic activity">
    <reaction evidence="2">
        <text>ATP + H2O = ADP + phosphate + H(+)</text>
        <dbReference type="Rhea" id="RHEA:13065"/>
        <dbReference type="ChEBI" id="CHEBI:15377"/>
        <dbReference type="ChEBI" id="CHEBI:15378"/>
        <dbReference type="ChEBI" id="CHEBI:30616"/>
        <dbReference type="ChEBI" id="CHEBI:43474"/>
        <dbReference type="ChEBI" id="CHEBI:456216"/>
    </reaction>
</comment>
<comment type="subunit">
    <text evidence="2">Component of the chaperonin-containing T-complex (TRiC), a hexadecamer composed of two identical back-to-back stacked rings enclosing a protein folding chamber. Each ring is made up of eight different subunits: TCP1/CCT1, CCT2, CCT3, CCT4, CCT5, CCT6A/CCT6, CCT7, CCT8. Interacts with PACRG. Interacts with GBA1. Interacts with DLEC1.</text>
</comment>
<comment type="subcellular location">
    <subcellularLocation>
        <location evidence="2">Cytoplasm</location>
        <location evidence="2">Cytosol</location>
    </subcellularLocation>
    <subcellularLocation>
        <location evidence="2">Cytoplasm</location>
        <location evidence="2">Cytoskeleton</location>
        <location evidence="2">Microtubule organizing center</location>
        <location evidence="2">Centrosome</location>
    </subcellularLocation>
</comment>
<comment type="similarity">
    <text evidence="4">Belongs to the TCP-1 chaperonin family.</text>
</comment>
<keyword id="KW-0007">Acetylation</keyword>
<keyword id="KW-0067">ATP-binding</keyword>
<keyword id="KW-0143">Chaperone</keyword>
<keyword id="KW-0963">Cytoplasm</keyword>
<keyword id="KW-0206">Cytoskeleton</keyword>
<keyword id="KW-0378">Hydrolase</keyword>
<keyword id="KW-0460">Magnesium</keyword>
<keyword id="KW-0479">Metal-binding</keyword>
<keyword id="KW-0547">Nucleotide-binding</keyword>
<keyword id="KW-0597">Phosphoprotein</keyword>
<keyword id="KW-1185">Reference proteome</keyword>
<gene>
    <name type="primary">TCP1</name>
    <name type="synonym">CCT1</name>
</gene>
<reference key="1">
    <citation type="journal article" date="1999" name="Genetics">
        <title>Origin of gene overlap: the case of TCP1 and ACAT2.</title>
        <authorList>
            <person name="Shintani S."/>
            <person name="O'Huigin C."/>
            <person name="Toyosawa S."/>
            <person name="Michalova V."/>
            <person name="Klein J."/>
        </authorList>
    </citation>
    <scope>NUCLEOTIDE SEQUENCE [MRNA]</scope>
</reference>
<name>TCPA_MONDO</name>
<protein>
    <recommendedName>
        <fullName>T-complex protein 1 subunit alpha</fullName>
        <shortName>TCP-1-alpha</shortName>
        <ecNumber evidence="2">3.6.1.-</ecNumber>
    </recommendedName>
    <alternativeName>
        <fullName>CCT-alpha</fullName>
    </alternativeName>
</protein>